<protein>
    <recommendedName>
        <fullName evidence="1">Tryptophan synthase alpha chain</fullName>
        <ecNumber evidence="1">4.2.1.20</ecNumber>
    </recommendedName>
</protein>
<keyword id="KW-0028">Amino-acid biosynthesis</keyword>
<keyword id="KW-0057">Aromatic amino acid biosynthesis</keyword>
<keyword id="KW-0456">Lyase</keyword>
<keyword id="KW-0822">Tryptophan biosynthesis</keyword>
<evidence type="ECO:0000255" key="1">
    <source>
        <dbReference type="HAMAP-Rule" id="MF_00131"/>
    </source>
</evidence>
<proteinExistence type="inferred from homology"/>
<feature type="chain" id="PRO_1000095713" description="Tryptophan synthase alpha chain">
    <location>
        <begin position="1"/>
        <end position="268"/>
    </location>
</feature>
<feature type="active site" description="Proton acceptor" evidence="1">
    <location>
        <position position="49"/>
    </location>
</feature>
<feature type="active site" description="Proton acceptor" evidence="1">
    <location>
        <position position="60"/>
    </location>
</feature>
<sequence length="268" mass="28725">MERYESLFAQLKERKEGAFVPFVTLGDPGIEQSLKIIDTLIEAGADTLELGIPFSDPLADGPTIQNATLRAFAAGVTPAQCFEMLALIRQKHPTIPIGLLMYANLVFNKGIDEFYAQCEKVGVDSVLVADVPVEESAPFRQAALRHNVAPIFICPPNADDDLLRQIASYGRGYTYLLSRAGVTGAENRAALPLNHLVAKLKEYNAAPPLQGFGISAPDQVKAAIDAGAAGAISGSAIVKIIEQHINEPKKMLAALKAFVQPMKAATRS</sequence>
<gene>
    <name evidence="1" type="primary">trpA</name>
    <name type="ordered locus">ECH74115_1892</name>
</gene>
<comment type="function">
    <text evidence="1">The alpha subunit is responsible for the aldol cleavage of indoleglycerol phosphate to indole and glyceraldehyde 3-phosphate.</text>
</comment>
<comment type="catalytic activity">
    <reaction evidence="1">
        <text>(1S,2R)-1-C-(indol-3-yl)glycerol 3-phosphate + L-serine = D-glyceraldehyde 3-phosphate + L-tryptophan + H2O</text>
        <dbReference type="Rhea" id="RHEA:10532"/>
        <dbReference type="ChEBI" id="CHEBI:15377"/>
        <dbReference type="ChEBI" id="CHEBI:33384"/>
        <dbReference type="ChEBI" id="CHEBI:57912"/>
        <dbReference type="ChEBI" id="CHEBI:58866"/>
        <dbReference type="ChEBI" id="CHEBI:59776"/>
        <dbReference type="EC" id="4.2.1.20"/>
    </reaction>
</comment>
<comment type="pathway">
    <text evidence="1">Amino-acid biosynthesis; L-tryptophan biosynthesis; L-tryptophan from chorismate: step 5/5.</text>
</comment>
<comment type="subunit">
    <text evidence="1">Tetramer of two alpha and two beta chains.</text>
</comment>
<comment type="similarity">
    <text evidence="1">Belongs to the TrpA family.</text>
</comment>
<organism>
    <name type="scientific">Escherichia coli O157:H7 (strain EC4115 / EHEC)</name>
    <dbReference type="NCBI Taxonomy" id="444450"/>
    <lineage>
        <taxon>Bacteria</taxon>
        <taxon>Pseudomonadati</taxon>
        <taxon>Pseudomonadota</taxon>
        <taxon>Gammaproteobacteria</taxon>
        <taxon>Enterobacterales</taxon>
        <taxon>Enterobacteriaceae</taxon>
        <taxon>Escherichia</taxon>
    </lineage>
</organism>
<accession>B5YZP0</accession>
<reference key="1">
    <citation type="journal article" date="2011" name="Proc. Natl. Acad. Sci. U.S.A.">
        <title>Genomic anatomy of Escherichia coli O157:H7 outbreaks.</title>
        <authorList>
            <person name="Eppinger M."/>
            <person name="Mammel M.K."/>
            <person name="Leclerc J.E."/>
            <person name="Ravel J."/>
            <person name="Cebula T.A."/>
        </authorList>
    </citation>
    <scope>NUCLEOTIDE SEQUENCE [LARGE SCALE GENOMIC DNA]</scope>
    <source>
        <strain>EC4115 / EHEC</strain>
    </source>
</reference>
<name>TRPA_ECO5E</name>
<dbReference type="EC" id="4.2.1.20" evidence="1"/>
<dbReference type="EMBL" id="CP001164">
    <property type="protein sequence ID" value="ACI38867.1"/>
    <property type="molecule type" value="Genomic_DNA"/>
</dbReference>
<dbReference type="RefSeq" id="WP_000443092.1">
    <property type="nucleotide sequence ID" value="NC_011353.1"/>
</dbReference>
<dbReference type="SMR" id="B5YZP0"/>
<dbReference type="KEGG" id="ecf:ECH74115_1892"/>
<dbReference type="HOGENOM" id="CLU_016734_0_4_6"/>
<dbReference type="UniPathway" id="UPA00035">
    <property type="reaction ID" value="UER00044"/>
</dbReference>
<dbReference type="GO" id="GO:0005829">
    <property type="term" value="C:cytosol"/>
    <property type="evidence" value="ECO:0007669"/>
    <property type="project" value="TreeGrafter"/>
</dbReference>
<dbReference type="GO" id="GO:0004834">
    <property type="term" value="F:tryptophan synthase activity"/>
    <property type="evidence" value="ECO:0007669"/>
    <property type="project" value="UniProtKB-UniRule"/>
</dbReference>
<dbReference type="CDD" id="cd04724">
    <property type="entry name" value="Tryptophan_synthase_alpha"/>
    <property type="match status" value="1"/>
</dbReference>
<dbReference type="FunFam" id="3.20.20.70:FF:000037">
    <property type="entry name" value="Tryptophan synthase alpha chain"/>
    <property type="match status" value="1"/>
</dbReference>
<dbReference type="Gene3D" id="3.20.20.70">
    <property type="entry name" value="Aldolase class I"/>
    <property type="match status" value="1"/>
</dbReference>
<dbReference type="HAMAP" id="MF_00131">
    <property type="entry name" value="Trp_synth_alpha"/>
    <property type="match status" value="1"/>
</dbReference>
<dbReference type="InterPro" id="IPR013785">
    <property type="entry name" value="Aldolase_TIM"/>
</dbReference>
<dbReference type="InterPro" id="IPR011060">
    <property type="entry name" value="RibuloseP-bd_barrel"/>
</dbReference>
<dbReference type="InterPro" id="IPR018204">
    <property type="entry name" value="Trp_synthase_alpha_AS"/>
</dbReference>
<dbReference type="InterPro" id="IPR002028">
    <property type="entry name" value="Trp_synthase_suA"/>
</dbReference>
<dbReference type="NCBIfam" id="TIGR00262">
    <property type="entry name" value="trpA"/>
    <property type="match status" value="1"/>
</dbReference>
<dbReference type="PANTHER" id="PTHR43406:SF1">
    <property type="entry name" value="TRYPTOPHAN SYNTHASE ALPHA CHAIN, CHLOROPLASTIC"/>
    <property type="match status" value="1"/>
</dbReference>
<dbReference type="PANTHER" id="PTHR43406">
    <property type="entry name" value="TRYPTOPHAN SYNTHASE, ALPHA CHAIN"/>
    <property type="match status" value="1"/>
</dbReference>
<dbReference type="Pfam" id="PF00290">
    <property type="entry name" value="Trp_syntA"/>
    <property type="match status" value="1"/>
</dbReference>
<dbReference type="SUPFAM" id="SSF51366">
    <property type="entry name" value="Ribulose-phoshate binding barrel"/>
    <property type="match status" value="1"/>
</dbReference>
<dbReference type="PROSITE" id="PS00167">
    <property type="entry name" value="TRP_SYNTHASE_ALPHA"/>
    <property type="match status" value="1"/>
</dbReference>